<protein>
    <recommendedName>
        <fullName>Uncharacterized RNA methyltransferase sll1967</fullName>
        <ecNumber>2.1.1.-</ecNumber>
    </recommendedName>
</protein>
<sequence>MTQSNNFATSPLWQQGSVVELTITGLNHQGEGIGRFNERVVFVPDTAPGDRLEVRLVKVKRNYALAQLLKILEPSVQRTRPSCIVADKCGGCQWQHLDYQFQVESKQQQIIDALERIGGFTTLPLEPLLQSPASLGYRNKATYPLSRSKTGQVQAGYYRKGSHRLVNINQCPVQDDRLNLLLTEVKKDIENRGWSIYDEEKKQGKLRHLSLRIGQRTGEMLLTLISAHKGLPDLEEQAGEWLERYPDLGGICLNIQPEPNNRIFGDETVVIAGRGICREKFADLSFSLGANTFFQVNSGAAELLLTRLQQALNLQGAELLVDAYAGVGTFTLPLARQVRQAIAIEVNQDSVHQGQRNAEINQIANVDFLAGTVETVLPTLSEIPDVLLLDPPRKGCAPEVLREIIRQRPEKIAYISCQPPTLARDLKFLCAEGFYGITWVQGCDFFPQTAHVECAVILKAVNG</sequence>
<keyword id="KW-0004">4Fe-4S</keyword>
<keyword id="KW-0408">Iron</keyword>
<keyword id="KW-0411">Iron-sulfur</keyword>
<keyword id="KW-0479">Metal-binding</keyword>
<keyword id="KW-0489">Methyltransferase</keyword>
<keyword id="KW-1185">Reference proteome</keyword>
<keyword id="KW-0949">S-adenosyl-L-methionine</keyword>
<keyword id="KW-0808">Transferase</keyword>
<evidence type="ECO:0000250" key="1"/>
<evidence type="ECO:0000255" key="2">
    <source>
        <dbReference type="PROSITE-ProRule" id="PRU00208"/>
    </source>
</evidence>
<evidence type="ECO:0000255" key="3">
    <source>
        <dbReference type="PROSITE-ProRule" id="PRU01024"/>
    </source>
</evidence>
<reference key="1">
    <citation type="journal article" date="1996" name="DNA Res.">
        <title>Sequence analysis of the genome of the unicellular cyanobacterium Synechocystis sp. strain PCC6803. II. Sequence determination of the entire genome and assignment of potential protein-coding regions.</title>
        <authorList>
            <person name="Kaneko T."/>
            <person name="Sato S."/>
            <person name="Kotani H."/>
            <person name="Tanaka A."/>
            <person name="Asamizu E."/>
            <person name="Nakamura Y."/>
            <person name="Miyajima N."/>
            <person name="Hirosawa M."/>
            <person name="Sugiura M."/>
            <person name="Sasamoto S."/>
            <person name="Kimura T."/>
            <person name="Hosouchi T."/>
            <person name="Matsuno A."/>
            <person name="Muraki A."/>
            <person name="Nakazaki N."/>
            <person name="Naruo K."/>
            <person name="Okumura S."/>
            <person name="Shimpo S."/>
            <person name="Takeuchi C."/>
            <person name="Wada T."/>
            <person name="Watanabe A."/>
            <person name="Yamada M."/>
            <person name="Yasuda M."/>
            <person name="Tabata S."/>
        </authorList>
    </citation>
    <scope>NUCLEOTIDE SEQUENCE [LARGE SCALE GENOMIC DNA]</scope>
    <source>
        <strain>ATCC 27184 / PCC 6803 / Kazusa</strain>
    </source>
</reference>
<proteinExistence type="inferred from homology"/>
<organism>
    <name type="scientific">Synechocystis sp. (strain ATCC 27184 / PCC 6803 / Kazusa)</name>
    <dbReference type="NCBI Taxonomy" id="1111708"/>
    <lineage>
        <taxon>Bacteria</taxon>
        <taxon>Bacillati</taxon>
        <taxon>Cyanobacteriota</taxon>
        <taxon>Cyanophyceae</taxon>
        <taxon>Synechococcales</taxon>
        <taxon>Merismopediaceae</taxon>
        <taxon>Synechocystis</taxon>
    </lineage>
</organism>
<accession>P73374</accession>
<name>Y1967_SYNY3</name>
<dbReference type="EC" id="2.1.1.-"/>
<dbReference type="EMBL" id="BA000022">
    <property type="protein sequence ID" value="BAA17405.1"/>
    <property type="molecule type" value="Genomic_DNA"/>
</dbReference>
<dbReference type="PIR" id="S77558">
    <property type="entry name" value="S77558"/>
</dbReference>
<dbReference type="SMR" id="P73374"/>
<dbReference type="FunCoup" id="P73374">
    <property type="interactions" value="562"/>
</dbReference>
<dbReference type="IntAct" id="P73374">
    <property type="interactions" value="10"/>
</dbReference>
<dbReference type="STRING" id="1148.gene:10498268"/>
<dbReference type="PaxDb" id="1148-1652483"/>
<dbReference type="EnsemblBacteria" id="BAA17405">
    <property type="protein sequence ID" value="BAA17405"/>
    <property type="gene ID" value="BAA17405"/>
</dbReference>
<dbReference type="KEGG" id="syn:sll1967"/>
<dbReference type="eggNOG" id="COG2265">
    <property type="taxonomic scope" value="Bacteria"/>
</dbReference>
<dbReference type="InParanoid" id="P73374"/>
<dbReference type="PhylomeDB" id="P73374"/>
<dbReference type="Proteomes" id="UP000001425">
    <property type="component" value="Chromosome"/>
</dbReference>
<dbReference type="GO" id="GO:0051539">
    <property type="term" value="F:4 iron, 4 sulfur cluster binding"/>
    <property type="evidence" value="ECO:0007669"/>
    <property type="project" value="UniProtKB-KW"/>
</dbReference>
<dbReference type="GO" id="GO:0046872">
    <property type="term" value="F:metal ion binding"/>
    <property type="evidence" value="ECO:0007669"/>
    <property type="project" value="UniProtKB-KW"/>
</dbReference>
<dbReference type="GO" id="GO:0070041">
    <property type="term" value="F:rRNA (uridine-C5-)-methyltransferase activity"/>
    <property type="evidence" value="ECO:0000318"/>
    <property type="project" value="GO_Central"/>
</dbReference>
<dbReference type="GO" id="GO:0070475">
    <property type="term" value="P:rRNA base methylation"/>
    <property type="evidence" value="ECO:0000318"/>
    <property type="project" value="GO_Central"/>
</dbReference>
<dbReference type="CDD" id="cd02440">
    <property type="entry name" value="AdoMet_MTases"/>
    <property type="match status" value="1"/>
</dbReference>
<dbReference type="FunFam" id="3.40.50.150:FF:000009">
    <property type="entry name" value="23S rRNA (Uracil(1939)-C(5))-methyltransferase RlmD"/>
    <property type="match status" value="1"/>
</dbReference>
<dbReference type="FunFam" id="2.40.50.140:FF:000097">
    <property type="entry name" value="23S rRNA (uracil(1939)-C(5))-methyltransferase RlmD"/>
    <property type="match status" value="1"/>
</dbReference>
<dbReference type="FunFam" id="2.40.50.1070:FF:000003">
    <property type="entry name" value="23S rRNA (Uracil-5-)-methyltransferase RumA"/>
    <property type="match status" value="1"/>
</dbReference>
<dbReference type="Gene3D" id="2.40.50.1070">
    <property type="match status" value="1"/>
</dbReference>
<dbReference type="Gene3D" id="2.40.50.140">
    <property type="entry name" value="Nucleic acid-binding proteins"/>
    <property type="match status" value="1"/>
</dbReference>
<dbReference type="Gene3D" id="3.40.50.150">
    <property type="entry name" value="Vaccinia Virus protein VP39"/>
    <property type="match status" value="1"/>
</dbReference>
<dbReference type="InterPro" id="IPR030390">
    <property type="entry name" value="MeTrfase_TrmA_AS"/>
</dbReference>
<dbReference type="InterPro" id="IPR012340">
    <property type="entry name" value="NA-bd_OB-fold"/>
</dbReference>
<dbReference type="InterPro" id="IPR029063">
    <property type="entry name" value="SAM-dependent_MTases_sf"/>
</dbReference>
<dbReference type="InterPro" id="IPR002792">
    <property type="entry name" value="TRAM_dom"/>
</dbReference>
<dbReference type="InterPro" id="IPR010280">
    <property type="entry name" value="U5_MeTrfase_fam"/>
</dbReference>
<dbReference type="NCBIfam" id="TIGR00479">
    <property type="entry name" value="rumA"/>
    <property type="match status" value="1"/>
</dbReference>
<dbReference type="PANTHER" id="PTHR11061">
    <property type="entry name" value="RNA M5U METHYLTRANSFERASE"/>
    <property type="match status" value="1"/>
</dbReference>
<dbReference type="PANTHER" id="PTHR11061:SF30">
    <property type="entry name" value="TRNA (URACIL(54)-C(5))-METHYLTRANSFERASE"/>
    <property type="match status" value="1"/>
</dbReference>
<dbReference type="Pfam" id="PF01938">
    <property type="entry name" value="TRAM"/>
    <property type="match status" value="1"/>
</dbReference>
<dbReference type="Pfam" id="PF05958">
    <property type="entry name" value="tRNA_U5-meth_tr"/>
    <property type="match status" value="1"/>
</dbReference>
<dbReference type="SUPFAM" id="SSF50249">
    <property type="entry name" value="Nucleic acid-binding proteins"/>
    <property type="match status" value="1"/>
</dbReference>
<dbReference type="SUPFAM" id="SSF53335">
    <property type="entry name" value="S-adenosyl-L-methionine-dependent methyltransferases"/>
    <property type="match status" value="1"/>
</dbReference>
<dbReference type="PROSITE" id="PS51687">
    <property type="entry name" value="SAM_MT_RNA_M5U"/>
    <property type="match status" value="1"/>
</dbReference>
<dbReference type="PROSITE" id="PS50926">
    <property type="entry name" value="TRAM"/>
    <property type="match status" value="1"/>
</dbReference>
<dbReference type="PROSITE" id="PS01230">
    <property type="entry name" value="TRMA_1"/>
    <property type="match status" value="1"/>
</dbReference>
<comment type="similarity">
    <text evidence="3">Belongs to the class I-like SAM-binding methyltransferase superfamily. RNA M5U methyltransferase family.</text>
</comment>
<gene>
    <name type="ordered locus">sll1967</name>
</gene>
<feature type="chain" id="PRO_0000162045" description="Uncharacterized RNA methyltransferase sll1967">
    <location>
        <begin position="1"/>
        <end position="463"/>
    </location>
</feature>
<feature type="domain" description="TRAM" evidence="2">
    <location>
        <begin position="12"/>
        <end position="70"/>
    </location>
</feature>
<feature type="active site" description="Nucleophile" evidence="3">
    <location>
        <position position="417"/>
    </location>
</feature>
<feature type="binding site" evidence="1">
    <location>
        <position position="83"/>
    </location>
    <ligand>
        <name>[4Fe-4S] cluster</name>
        <dbReference type="ChEBI" id="CHEBI:49883"/>
    </ligand>
</feature>
<feature type="binding site" evidence="1">
    <location>
        <position position="89"/>
    </location>
    <ligand>
        <name>[4Fe-4S] cluster</name>
        <dbReference type="ChEBI" id="CHEBI:49883"/>
    </ligand>
</feature>
<feature type="binding site" evidence="1">
    <location>
        <position position="92"/>
    </location>
    <ligand>
        <name>[4Fe-4S] cluster</name>
        <dbReference type="ChEBI" id="CHEBI:49883"/>
    </ligand>
</feature>
<feature type="binding site" evidence="1">
    <location>
        <position position="171"/>
    </location>
    <ligand>
        <name>[4Fe-4S] cluster</name>
        <dbReference type="ChEBI" id="CHEBI:49883"/>
    </ligand>
</feature>
<feature type="binding site" evidence="3">
    <location>
        <position position="295"/>
    </location>
    <ligand>
        <name>S-adenosyl-L-methionine</name>
        <dbReference type="ChEBI" id="CHEBI:59789"/>
    </ligand>
</feature>
<feature type="binding site" evidence="3">
    <location>
        <position position="324"/>
    </location>
    <ligand>
        <name>S-adenosyl-L-methionine</name>
        <dbReference type="ChEBI" id="CHEBI:59789"/>
    </ligand>
</feature>
<feature type="binding site" evidence="3">
    <location>
        <position position="345"/>
    </location>
    <ligand>
        <name>S-adenosyl-L-methionine</name>
        <dbReference type="ChEBI" id="CHEBI:59789"/>
    </ligand>
</feature>
<feature type="binding site" evidence="3">
    <location>
        <position position="390"/>
    </location>
    <ligand>
        <name>S-adenosyl-L-methionine</name>
        <dbReference type="ChEBI" id="CHEBI:59789"/>
    </ligand>
</feature>